<accession>Q4FU71</accession>
<keyword id="KW-0030">Aminoacyl-tRNA synthetase</keyword>
<keyword id="KW-0067">ATP-binding</keyword>
<keyword id="KW-0963">Cytoplasm</keyword>
<keyword id="KW-0436">Ligase</keyword>
<keyword id="KW-0547">Nucleotide-binding</keyword>
<keyword id="KW-0648">Protein biosynthesis</keyword>
<keyword id="KW-1185">Reference proteome</keyword>
<name>SYL_PSYA2</name>
<comment type="catalytic activity">
    <reaction evidence="1">
        <text>tRNA(Leu) + L-leucine + ATP = L-leucyl-tRNA(Leu) + AMP + diphosphate</text>
        <dbReference type="Rhea" id="RHEA:11688"/>
        <dbReference type="Rhea" id="RHEA-COMP:9613"/>
        <dbReference type="Rhea" id="RHEA-COMP:9622"/>
        <dbReference type="ChEBI" id="CHEBI:30616"/>
        <dbReference type="ChEBI" id="CHEBI:33019"/>
        <dbReference type="ChEBI" id="CHEBI:57427"/>
        <dbReference type="ChEBI" id="CHEBI:78442"/>
        <dbReference type="ChEBI" id="CHEBI:78494"/>
        <dbReference type="ChEBI" id="CHEBI:456215"/>
        <dbReference type="EC" id="6.1.1.4"/>
    </reaction>
</comment>
<comment type="subcellular location">
    <subcellularLocation>
        <location evidence="1">Cytoplasm</location>
    </subcellularLocation>
</comment>
<comment type="similarity">
    <text evidence="1">Belongs to the class-I aminoacyl-tRNA synthetase family.</text>
</comment>
<proteinExistence type="inferred from homology"/>
<reference key="1">
    <citation type="journal article" date="2010" name="Appl. Environ. Microbiol.">
        <title>The genome sequence of Psychrobacter arcticus 273-4, a psychroactive Siberian permafrost bacterium, reveals mechanisms for adaptation to low-temperature growth.</title>
        <authorList>
            <person name="Ayala-del-Rio H.L."/>
            <person name="Chain P.S."/>
            <person name="Grzymski J.J."/>
            <person name="Ponder M.A."/>
            <person name="Ivanova N."/>
            <person name="Bergholz P.W."/>
            <person name="Di Bartolo G."/>
            <person name="Hauser L."/>
            <person name="Land M."/>
            <person name="Bakermans C."/>
            <person name="Rodrigues D."/>
            <person name="Klappenbach J."/>
            <person name="Zarka D."/>
            <person name="Larimer F."/>
            <person name="Richardson P."/>
            <person name="Murray A."/>
            <person name="Thomashow M."/>
            <person name="Tiedje J.M."/>
        </authorList>
    </citation>
    <scope>NUCLEOTIDE SEQUENCE [LARGE SCALE GENOMIC DNA]</scope>
    <source>
        <strain>DSM 17307 / VKM B-2377 / 273-4</strain>
    </source>
</reference>
<evidence type="ECO:0000255" key="1">
    <source>
        <dbReference type="HAMAP-Rule" id="MF_00049"/>
    </source>
</evidence>
<dbReference type="EC" id="6.1.1.4" evidence="1"/>
<dbReference type="EMBL" id="CP000082">
    <property type="protein sequence ID" value="AAZ18437.1"/>
    <property type="molecule type" value="Genomic_DNA"/>
</dbReference>
<dbReference type="SMR" id="Q4FU71"/>
<dbReference type="STRING" id="259536.Psyc_0576"/>
<dbReference type="KEGG" id="par:Psyc_0576"/>
<dbReference type="eggNOG" id="COG0495">
    <property type="taxonomic scope" value="Bacteria"/>
</dbReference>
<dbReference type="HOGENOM" id="CLU_004427_0_0_6"/>
<dbReference type="OrthoDB" id="9810365at2"/>
<dbReference type="Proteomes" id="UP000000546">
    <property type="component" value="Chromosome"/>
</dbReference>
<dbReference type="GO" id="GO:0005829">
    <property type="term" value="C:cytosol"/>
    <property type="evidence" value="ECO:0007669"/>
    <property type="project" value="TreeGrafter"/>
</dbReference>
<dbReference type="GO" id="GO:0002161">
    <property type="term" value="F:aminoacyl-tRNA deacylase activity"/>
    <property type="evidence" value="ECO:0007669"/>
    <property type="project" value="InterPro"/>
</dbReference>
<dbReference type="GO" id="GO:0005524">
    <property type="term" value="F:ATP binding"/>
    <property type="evidence" value="ECO:0007669"/>
    <property type="project" value="UniProtKB-UniRule"/>
</dbReference>
<dbReference type="GO" id="GO:0004823">
    <property type="term" value="F:leucine-tRNA ligase activity"/>
    <property type="evidence" value="ECO:0007669"/>
    <property type="project" value="UniProtKB-UniRule"/>
</dbReference>
<dbReference type="GO" id="GO:0006429">
    <property type="term" value="P:leucyl-tRNA aminoacylation"/>
    <property type="evidence" value="ECO:0007669"/>
    <property type="project" value="UniProtKB-UniRule"/>
</dbReference>
<dbReference type="CDD" id="cd07958">
    <property type="entry name" value="Anticodon_Ia_Leu_BEm"/>
    <property type="match status" value="1"/>
</dbReference>
<dbReference type="CDD" id="cd00812">
    <property type="entry name" value="LeuRS_core"/>
    <property type="match status" value="1"/>
</dbReference>
<dbReference type="FunFam" id="1.10.730.10:FF:000002">
    <property type="entry name" value="Leucine--tRNA ligase"/>
    <property type="match status" value="1"/>
</dbReference>
<dbReference type="FunFam" id="3.40.50.620:FF:000003">
    <property type="entry name" value="Leucine--tRNA ligase"/>
    <property type="match status" value="1"/>
</dbReference>
<dbReference type="FunFam" id="3.40.50.620:FF:000124">
    <property type="entry name" value="Leucine--tRNA ligase"/>
    <property type="match status" value="1"/>
</dbReference>
<dbReference type="Gene3D" id="2.20.28.290">
    <property type="match status" value="1"/>
</dbReference>
<dbReference type="Gene3D" id="3.10.20.590">
    <property type="match status" value="1"/>
</dbReference>
<dbReference type="Gene3D" id="3.40.50.620">
    <property type="entry name" value="HUPs"/>
    <property type="match status" value="2"/>
</dbReference>
<dbReference type="Gene3D" id="1.10.730.10">
    <property type="entry name" value="Isoleucyl-tRNA Synthetase, Domain 1"/>
    <property type="match status" value="1"/>
</dbReference>
<dbReference type="HAMAP" id="MF_00049_B">
    <property type="entry name" value="Leu_tRNA_synth_B"/>
    <property type="match status" value="1"/>
</dbReference>
<dbReference type="InterPro" id="IPR001412">
    <property type="entry name" value="aa-tRNA-synth_I_CS"/>
</dbReference>
<dbReference type="InterPro" id="IPR002300">
    <property type="entry name" value="aa-tRNA-synth_Ia"/>
</dbReference>
<dbReference type="InterPro" id="IPR002302">
    <property type="entry name" value="Leu-tRNA-ligase"/>
</dbReference>
<dbReference type="InterPro" id="IPR025709">
    <property type="entry name" value="Leu_tRNA-synth_edit"/>
</dbReference>
<dbReference type="InterPro" id="IPR013155">
    <property type="entry name" value="M/V/L/I-tRNA-synth_anticd-bd"/>
</dbReference>
<dbReference type="InterPro" id="IPR015413">
    <property type="entry name" value="Methionyl/Leucyl_tRNA_Synth"/>
</dbReference>
<dbReference type="InterPro" id="IPR014729">
    <property type="entry name" value="Rossmann-like_a/b/a_fold"/>
</dbReference>
<dbReference type="InterPro" id="IPR009080">
    <property type="entry name" value="tRNAsynth_Ia_anticodon-bd"/>
</dbReference>
<dbReference type="InterPro" id="IPR009008">
    <property type="entry name" value="Val/Leu/Ile-tRNA-synth_edit"/>
</dbReference>
<dbReference type="NCBIfam" id="TIGR00396">
    <property type="entry name" value="leuS_bact"/>
    <property type="match status" value="1"/>
</dbReference>
<dbReference type="PANTHER" id="PTHR43740:SF2">
    <property type="entry name" value="LEUCINE--TRNA LIGASE, MITOCHONDRIAL"/>
    <property type="match status" value="1"/>
</dbReference>
<dbReference type="PANTHER" id="PTHR43740">
    <property type="entry name" value="LEUCYL-TRNA SYNTHETASE"/>
    <property type="match status" value="1"/>
</dbReference>
<dbReference type="Pfam" id="PF08264">
    <property type="entry name" value="Anticodon_1"/>
    <property type="match status" value="1"/>
</dbReference>
<dbReference type="Pfam" id="PF00133">
    <property type="entry name" value="tRNA-synt_1"/>
    <property type="match status" value="1"/>
</dbReference>
<dbReference type="Pfam" id="PF13603">
    <property type="entry name" value="tRNA-synt_1_2"/>
    <property type="match status" value="1"/>
</dbReference>
<dbReference type="Pfam" id="PF09334">
    <property type="entry name" value="tRNA-synt_1g"/>
    <property type="match status" value="1"/>
</dbReference>
<dbReference type="PRINTS" id="PR00985">
    <property type="entry name" value="TRNASYNTHLEU"/>
</dbReference>
<dbReference type="SUPFAM" id="SSF47323">
    <property type="entry name" value="Anticodon-binding domain of a subclass of class I aminoacyl-tRNA synthetases"/>
    <property type="match status" value="1"/>
</dbReference>
<dbReference type="SUPFAM" id="SSF52374">
    <property type="entry name" value="Nucleotidylyl transferase"/>
    <property type="match status" value="1"/>
</dbReference>
<dbReference type="SUPFAM" id="SSF50677">
    <property type="entry name" value="ValRS/IleRS/LeuRS editing domain"/>
    <property type="match status" value="1"/>
</dbReference>
<dbReference type="PROSITE" id="PS00178">
    <property type="entry name" value="AA_TRNA_LIGASE_I"/>
    <property type="match status" value="1"/>
</dbReference>
<feature type="chain" id="PRO_0000334797" description="Leucine--tRNA ligase">
    <location>
        <begin position="1"/>
        <end position="921"/>
    </location>
</feature>
<feature type="short sequence motif" description="'HIGH' region">
    <location>
        <begin position="80"/>
        <end position="90"/>
    </location>
</feature>
<feature type="short sequence motif" description="'KMSKS' region">
    <location>
        <begin position="667"/>
        <end position="671"/>
    </location>
</feature>
<feature type="binding site" evidence="1">
    <location>
        <position position="670"/>
    </location>
    <ligand>
        <name>ATP</name>
        <dbReference type="ChEBI" id="CHEBI:30616"/>
    </ligand>
</feature>
<organism>
    <name type="scientific">Psychrobacter arcticus (strain DSM 17307 / VKM B-2377 / 273-4)</name>
    <dbReference type="NCBI Taxonomy" id="259536"/>
    <lineage>
        <taxon>Bacteria</taxon>
        <taxon>Pseudomonadati</taxon>
        <taxon>Pseudomonadota</taxon>
        <taxon>Gammaproteobacteria</taxon>
        <taxon>Moraxellales</taxon>
        <taxon>Moraxellaceae</taxon>
        <taxon>Psychrobacter</taxon>
    </lineage>
</organism>
<protein>
    <recommendedName>
        <fullName evidence="1">Leucine--tRNA ligase</fullName>
        <ecNumber evidence="1">6.1.1.4</ecNumber>
    </recommendedName>
    <alternativeName>
        <fullName evidence="1">Leucyl-tRNA synthetase</fullName>
        <shortName evidence="1">LeuRS</shortName>
    </alternativeName>
</protein>
<sequence length="921" mass="103244">MLWHYKISPHLSVITNSEPTMSNAVTAETANTNNTSIENAQYQPQLIEAAQQAKWATDKRFEVSNEPSDKPSRYMLSMFPYPSGKLHMGHVRNYTISDVLSRYYRLKGYEVMQPMGWDGFGLPAENAAIANQTPPAKWTFENIDSMRAQLKLLGLSIDWSREFATCSPEYYQWEQWLFLQLYKKGLVYKKLATVNWDPIDNTVLANEQVIDGKGWRSGAMVEKRDIPMYYFNITDYADELLDDLDQLEGHWPSEVITMQRNWIGRSSGMEVHFPYELAGESNSLDVFTTRPDTLMGVTYVAVAAEHPLAQYASEHNEAIAAFCALCKKGSVAEADLAKAEKVGIDTGLTVTHPLTGEEVPVWVANYVLMSYGSGAVMAVPAHDERDYEFATKYSLPIKQVIDIPARYFDDIEEGNDNRAYTERNTLVNSGEFDGMDFEQAFAAMLAKLEPQSLAKKKIQYRLRDWGVSRQRYWGCPIPMVNCEHCGTVPVEEQDLPVILPTDVVPDGRGNPLKNIPEFVNTTCPKCGNPAERETDTFDTFVESSWYYARFASPNDTTNMVNKSAANKWLPVDQYIGGVEHAVMHLLYARFFHKLMRDENLVSGDEPFANLMTQGMVLAGTFYRVNPDGSTTYYFTKDIDIDFNERGQPIKAILKSDGQPVTIGKIEKMSKSKNNGVDPQITIDKYGADTVRLYTLFTAPADQTLEWSDDALKGPYNFVKKVWRIASEHMQALTAANLSLDTLNNGTLNNDALNTEGLSKEAKALRRKTHETIGKIDSDLGKRLALNTPVSSLMELANELSNFKANSEQELQVQHEALIDLLIMLSVYAPHIGEHLLEQLGLDTVTLNYPAVDESALVQDMITMVIQVNGKMRGKMDVAPNSDPEALKAQARAIEGVAKFLTGEIKKEIVVPNKLVNIVVAG</sequence>
<gene>
    <name evidence="1" type="primary">leuS</name>
    <name type="ordered locus">Psyc_0576</name>
</gene>